<sequence>MYKLVLMRHGESQWNLENRFTGWTDVDLTETGREQARKAGELLKREGYAFDLAYTSVLKRAIRTLWIALDAMDAMYTPVGINWRLNERHYGQLQGLNKAETAAKYGDEQVLIWRRAYAIAPEPLDLEDPRHPRFDGRYAKIPADQLPATECLKDTVARVLPFWNESIAPAIRAGRRVLVAAHGNSLRALIKHLDNVSDDDIVGVNIPTGQPLVYELDEDLKPIRHYYLGDAAEIEAAMAAVAAQGKAKKD</sequence>
<evidence type="ECO:0000255" key="1">
    <source>
        <dbReference type="HAMAP-Rule" id="MF_01039"/>
    </source>
</evidence>
<feature type="chain" id="PRO_0000179851" description="2,3-bisphosphoglycerate-dependent phosphoglycerate mutase">
    <location>
        <begin position="1"/>
        <end position="250"/>
    </location>
</feature>
<feature type="active site" description="Tele-phosphohistidine intermediate" evidence="1">
    <location>
        <position position="9"/>
    </location>
</feature>
<feature type="active site" description="Proton donor/acceptor" evidence="1">
    <location>
        <position position="87"/>
    </location>
</feature>
<feature type="binding site" evidence="1">
    <location>
        <begin position="8"/>
        <end position="15"/>
    </location>
    <ligand>
        <name>substrate</name>
    </ligand>
</feature>
<feature type="binding site" evidence="1">
    <location>
        <begin position="21"/>
        <end position="22"/>
    </location>
    <ligand>
        <name>substrate</name>
    </ligand>
</feature>
<feature type="binding site" evidence="1">
    <location>
        <position position="60"/>
    </location>
    <ligand>
        <name>substrate</name>
    </ligand>
</feature>
<feature type="binding site" evidence="1">
    <location>
        <begin position="87"/>
        <end position="90"/>
    </location>
    <ligand>
        <name>substrate</name>
    </ligand>
</feature>
<feature type="binding site" evidence="1">
    <location>
        <position position="98"/>
    </location>
    <ligand>
        <name>substrate</name>
    </ligand>
</feature>
<feature type="binding site" evidence="1">
    <location>
        <begin position="114"/>
        <end position="115"/>
    </location>
    <ligand>
        <name>substrate</name>
    </ligand>
</feature>
<feature type="binding site" evidence="1">
    <location>
        <begin position="183"/>
        <end position="184"/>
    </location>
    <ligand>
        <name>substrate</name>
    </ligand>
</feature>
<feature type="site" description="Transition state stabilizer" evidence="1">
    <location>
        <position position="182"/>
    </location>
</feature>
<gene>
    <name evidence="1" type="primary">gpmA</name>
    <name type="synonym">gpm</name>
    <name type="ordered locus">BB0298</name>
</gene>
<proteinExistence type="inferred from homology"/>
<reference key="1">
    <citation type="journal article" date="2003" name="Nat. Genet.">
        <title>Comparative analysis of the genome sequences of Bordetella pertussis, Bordetella parapertussis and Bordetella bronchiseptica.</title>
        <authorList>
            <person name="Parkhill J."/>
            <person name="Sebaihia M."/>
            <person name="Preston A."/>
            <person name="Murphy L.D."/>
            <person name="Thomson N.R."/>
            <person name="Harris D.E."/>
            <person name="Holden M.T.G."/>
            <person name="Churcher C.M."/>
            <person name="Bentley S.D."/>
            <person name="Mungall K.L."/>
            <person name="Cerdeno-Tarraga A.-M."/>
            <person name="Temple L."/>
            <person name="James K.D."/>
            <person name="Harris B."/>
            <person name="Quail M.A."/>
            <person name="Achtman M."/>
            <person name="Atkin R."/>
            <person name="Baker S."/>
            <person name="Basham D."/>
            <person name="Bason N."/>
            <person name="Cherevach I."/>
            <person name="Chillingworth T."/>
            <person name="Collins M."/>
            <person name="Cronin A."/>
            <person name="Davis P."/>
            <person name="Doggett J."/>
            <person name="Feltwell T."/>
            <person name="Goble A."/>
            <person name="Hamlin N."/>
            <person name="Hauser H."/>
            <person name="Holroyd S."/>
            <person name="Jagels K."/>
            <person name="Leather S."/>
            <person name="Moule S."/>
            <person name="Norberczak H."/>
            <person name="O'Neil S."/>
            <person name="Ormond D."/>
            <person name="Price C."/>
            <person name="Rabbinowitsch E."/>
            <person name="Rutter S."/>
            <person name="Sanders M."/>
            <person name="Saunders D."/>
            <person name="Seeger K."/>
            <person name="Sharp S."/>
            <person name="Simmonds M."/>
            <person name="Skelton J."/>
            <person name="Squares R."/>
            <person name="Squares S."/>
            <person name="Stevens K."/>
            <person name="Unwin L."/>
            <person name="Whitehead S."/>
            <person name="Barrell B.G."/>
            <person name="Maskell D.J."/>
        </authorList>
    </citation>
    <scope>NUCLEOTIDE SEQUENCE [LARGE SCALE GENOMIC DNA]</scope>
    <source>
        <strain>ATCC BAA-588 / NCTC 13252 / RB50</strain>
    </source>
</reference>
<accession>Q7WQN2</accession>
<name>GPMA_BORBR</name>
<protein>
    <recommendedName>
        <fullName evidence="1">2,3-bisphosphoglycerate-dependent phosphoglycerate mutase</fullName>
        <shortName evidence="1">BPG-dependent PGAM</shortName>
        <shortName evidence="1">PGAM</shortName>
        <shortName evidence="1">Phosphoglyceromutase</shortName>
        <shortName evidence="1">dPGM</shortName>
        <ecNumber evidence="1">5.4.2.11</ecNumber>
    </recommendedName>
</protein>
<dbReference type="EC" id="5.4.2.11" evidence="1"/>
<dbReference type="EMBL" id="BX640437">
    <property type="protein sequence ID" value="CAE30796.1"/>
    <property type="molecule type" value="Genomic_DNA"/>
</dbReference>
<dbReference type="RefSeq" id="WP_003807430.1">
    <property type="nucleotide sequence ID" value="NC_002927.3"/>
</dbReference>
<dbReference type="SMR" id="Q7WQN2"/>
<dbReference type="GeneID" id="69600333"/>
<dbReference type="KEGG" id="bbr:BB0298"/>
<dbReference type="eggNOG" id="COG0588">
    <property type="taxonomic scope" value="Bacteria"/>
</dbReference>
<dbReference type="HOGENOM" id="CLU_033323_1_1_4"/>
<dbReference type="UniPathway" id="UPA00109">
    <property type="reaction ID" value="UER00186"/>
</dbReference>
<dbReference type="Proteomes" id="UP000001027">
    <property type="component" value="Chromosome"/>
</dbReference>
<dbReference type="GO" id="GO:0004619">
    <property type="term" value="F:phosphoglycerate mutase activity"/>
    <property type="evidence" value="ECO:0007669"/>
    <property type="project" value="UniProtKB-EC"/>
</dbReference>
<dbReference type="GO" id="GO:0006094">
    <property type="term" value="P:gluconeogenesis"/>
    <property type="evidence" value="ECO:0007669"/>
    <property type="project" value="UniProtKB-UniRule"/>
</dbReference>
<dbReference type="GO" id="GO:0006096">
    <property type="term" value="P:glycolytic process"/>
    <property type="evidence" value="ECO:0007669"/>
    <property type="project" value="UniProtKB-UniRule"/>
</dbReference>
<dbReference type="CDD" id="cd07067">
    <property type="entry name" value="HP_PGM_like"/>
    <property type="match status" value="1"/>
</dbReference>
<dbReference type="FunFam" id="3.40.50.1240:FF:000003">
    <property type="entry name" value="2,3-bisphosphoglycerate-dependent phosphoglycerate mutase"/>
    <property type="match status" value="1"/>
</dbReference>
<dbReference type="Gene3D" id="3.40.50.1240">
    <property type="entry name" value="Phosphoglycerate mutase-like"/>
    <property type="match status" value="1"/>
</dbReference>
<dbReference type="HAMAP" id="MF_01039">
    <property type="entry name" value="PGAM_GpmA"/>
    <property type="match status" value="1"/>
</dbReference>
<dbReference type="InterPro" id="IPR013078">
    <property type="entry name" value="His_Pase_superF_clade-1"/>
</dbReference>
<dbReference type="InterPro" id="IPR029033">
    <property type="entry name" value="His_PPase_superfam"/>
</dbReference>
<dbReference type="InterPro" id="IPR001345">
    <property type="entry name" value="PG/BPGM_mutase_AS"/>
</dbReference>
<dbReference type="InterPro" id="IPR005952">
    <property type="entry name" value="Phosphogly_mut1"/>
</dbReference>
<dbReference type="NCBIfam" id="TIGR01258">
    <property type="entry name" value="pgm_1"/>
    <property type="match status" value="1"/>
</dbReference>
<dbReference type="NCBIfam" id="NF010713">
    <property type="entry name" value="PRK14115.1"/>
    <property type="match status" value="1"/>
</dbReference>
<dbReference type="PANTHER" id="PTHR11931">
    <property type="entry name" value="PHOSPHOGLYCERATE MUTASE"/>
    <property type="match status" value="1"/>
</dbReference>
<dbReference type="Pfam" id="PF00300">
    <property type="entry name" value="His_Phos_1"/>
    <property type="match status" value="2"/>
</dbReference>
<dbReference type="PIRSF" id="PIRSF000709">
    <property type="entry name" value="6PFK_2-Ptase"/>
    <property type="match status" value="1"/>
</dbReference>
<dbReference type="SMART" id="SM00855">
    <property type="entry name" value="PGAM"/>
    <property type="match status" value="1"/>
</dbReference>
<dbReference type="SUPFAM" id="SSF53254">
    <property type="entry name" value="Phosphoglycerate mutase-like"/>
    <property type="match status" value="1"/>
</dbReference>
<dbReference type="PROSITE" id="PS00175">
    <property type="entry name" value="PG_MUTASE"/>
    <property type="match status" value="1"/>
</dbReference>
<comment type="function">
    <text evidence="1">Catalyzes the interconversion of 2-phosphoglycerate and 3-phosphoglycerate.</text>
</comment>
<comment type="catalytic activity">
    <reaction evidence="1">
        <text>(2R)-2-phosphoglycerate = (2R)-3-phosphoglycerate</text>
        <dbReference type="Rhea" id="RHEA:15901"/>
        <dbReference type="ChEBI" id="CHEBI:58272"/>
        <dbReference type="ChEBI" id="CHEBI:58289"/>
        <dbReference type="EC" id="5.4.2.11"/>
    </reaction>
</comment>
<comment type="pathway">
    <text evidence="1">Carbohydrate degradation; glycolysis; pyruvate from D-glyceraldehyde 3-phosphate: step 3/5.</text>
</comment>
<comment type="subunit">
    <text evidence="1">Homodimer.</text>
</comment>
<comment type="similarity">
    <text evidence="1">Belongs to the phosphoglycerate mutase family. BPG-dependent PGAM subfamily.</text>
</comment>
<keyword id="KW-0312">Gluconeogenesis</keyword>
<keyword id="KW-0324">Glycolysis</keyword>
<keyword id="KW-0413">Isomerase</keyword>
<organism>
    <name type="scientific">Bordetella bronchiseptica (strain ATCC BAA-588 / NCTC 13252 / RB50)</name>
    <name type="common">Alcaligenes bronchisepticus</name>
    <dbReference type="NCBI Taxonomy" id="257310"/>
    <lineage>
        <taxon>Bacteria</taxon>
        <taxon>Pseudomonadati</taxon>
        <taxon>Pseudomonadota</taxon>
        <taxon>Betaproteobacteria</taxon>
        <taxon>Burkholderiales</taxon>
        <taxon>Alcaligenaceae</taxon>
        <taxon>Bordetella</taxon>
    </lineage>
</organism>